<name>RS11_PROMP</name>
<feature type="chain" id="PRO_0000123200" description="Small ribosomal subunit protein uS11">
    <location>
        <begin position="1"/>
        <end position="130"/>
    </location>
</feature>
<dbReference type="EMBL" id="BX548174">
    <property type="protein sequence ID" value="CAE19995.1"/>
    <property type="molecule type" value="Genomic_DNA"/>
</dbReference>
<dbReference type="RefSeq" id="WP_011133164.1">
    <property type="nucleotide sequence ID" value="NC_005072.1"/>
</dbReference>
<dbReference type="SMR" id="Q7UZW5"/>
<dbReference type="STRING" id="59919.PMM1536"/>
<dbReference type="KEGG" id="pmm:PMM1536"/>
<dbReference type="eggNOG" id="COG0100">
    <property type="taxonomic scope" value="Bacteria"/>
</dbReference>
<dbReference type="HOGENOM" id="CLU_072439_5_0_3"/>
<dbReference type="OrthoDB" id="9806415at2"/>
<dbReference type="Proteomes" id="UP000001026">
    <property type="component" value="Chromosome"/>
</dbReference>
<dbReference type="GO" id="GO:1990904">
    <property type="term" value="C:ribonucleoprotein complex"/>
    <property type="evidence" value="ECO:0007669"/>
    <property type="project" value="UniProtKB-KW"/>
</dbReference>
<dbReference type="GO" id="GO:0005840">
    <property type="term" value="C:ribosome"/>
    <property type="evidence" value="ECO:0007669"/>
    <property type="project" value="UniProtKB-KW"/>
</dbReference>
<dbReference type="GO" id="GO:0019843">
    <property type="term" value="F:rRNA binding"/>
    <property type="evidence" value="ECO:0007669"/>
    <property type="project" value="UniProtKB-UniRule"/>
</dbReference>
<dbReference type="GO" id="GO:0003735">
    <property type="term" value="F:structural constituent of ribosome"/>
    <property type="evidence" value="ECO:0007669"/>
    <property type="project" value="InterPro"/>
</dbReference>
<dbReference type="GO" id="GO:0006412">
    <property type="term" value="P:translation"/>
    <property type="evidence" value="ECO:0007669"/>
    <property type="project" value="UniProtKB-UniRule"/>
</dbReference>
<dbReference type="FunFam" id="3.30.420.80:FF:000001">
    <property type="entry name" value="30S ribosomal protein S11"/>
    <property type="match status" value="1"/>
</dbReference>
<dbReference type="Gene3D" id="3.30.420.80">
    <property type="entry name" value="Ribosomal protein S11"/>
    <property type="match status" value="1"/>
</dbReference>
<dbReference type="HAMAP" id="MF_01310">
    <property type="entry name" value="Ribosomal_uS11"/>
    <property type="match status" value="1"/>
</dbReference>
<dbReference type="InterPro" id="IPR001971">
    <property type="entry name" value="Ribosomal_uS11"/>
</dbReference>
<dbReference type="InterPro" id="IPR019981">
    <property type="entry name" value="Ribosomal_uS11_bac-type"/>
</dbReference>
<dbReference type="InterPro" id="IPR018102">
    <property type="entry name" value="Ribosomal_uS11_CS"/>
</dbReference>
<dbReference type="InterPro" id="IPR036967">
    <property type="entry name" value="Ribosomal_uS11_sf"/>
</dbReference>
<dbReference type="NCBIfam" id="NF003698">
    <property type="entry name" value="PRK05309.1"/>
    <property type="match status" value="1"/>
</dbReference>
<dbReference type="NCBIfam" id="TIGR03632">
    <property type="entry name" value="uS11_bact"/>
    <property type="match status" value="1"/>
</dbReference>
<dbReference type="PANTHER" id="PTHR11759">
    <property type="entry name" value="40S RIBOSOMAL PROTEIN S14/30S RIBOSOMAL PROTEIN S11"/>
    <property type="match status" value="1"/>
</dbReference>
<dbReference type="Pfam" id="PF00411">
    <property type="entry name" value="Ribosomal_S11"/>
    <property type="match status" value="1"/>
</dbReference>
<dbReference type="PIRSF" id="PIRSF002131">
    <property type="entry name" value="Ribosomal_S11"/>
    <property type="match status" value="1"/>
</dbReference>
<dbReference type="SUPFAM" id="SSF53137">
    <property type="entry name" value="Translational machinery components"/>
    <property type="match status" value="1"/>
</dbReference>
<dbReference type="PROSITE" id="PS00054">
    <property type="entry name" value="RIBOSOMAL_S11"/>
    <property type="match status" value="1"/>
</dbReference>
<gene>
    <name evidence="1" type="primary">rpsK</name>
    <name evidence="1" type="synonym">rps11</name>
    <name type="ordered locus">PMM1536</name>
</gene>
<organism>
    <name type="scientific">Prochlorococcus marinus subsp. pastoris (strain CCMP1986 / NIES-2087 / MED4)</name>
    <dbReference type="NCBI Taxonomy" id="59919"/>
    <lineage>
        <taxon>Bacteria</taxon>
        <taxon>Bacillati</taxon>
        <taxon>Cyanobacteriota</taxon>
        <taxon>Cyanophyceae</taxon>
        <taxon>Synechococcales</taxon>
        <taxon>Prochlorococcaceae</taxon>
        <taxon>Prochlorococcus</taxon>
    </lineage>
</organism>
<sequence>MAAPVKKTGSKKSKKNVPNGVVHIQSTFNNTIVSITDTSGHVISWSSAGASGFKGARKGTPFAAQTAAEAAAKRALDQGMRQIKVLVRGPGSGRETAIRALQVAGLEITLIRDVTPLPHNGCRRPKRRRV</sequence>
<proteinExistence type="inferred from homology"/>
<comment type="function">
    <text evidence="1">Located on the platform of the 30S subunit, it bridges several disparate RNA helices of the 16S rRNA. Forms part of the Shine-Dalgarno cleft in the 70S ribosome.</text>
</comment>
<comment type="subunit">
    <text evidence="1">Part of the 30S ribosomal subunit. Interacts with proteins S7 and S18. Binds to IF-3.</text>
</comment>
<comment type="similarity">
    <text evidence="1">Belongs to the universal ribosomal protein uS11 family.</text>
</comment>
<accession>Q7UZW5</accession>
<protein>
    <recommendedName>
        <fullName evidence="1">Small ribosomal subunit protein uS11</fullName>
    </recommendedName>
    <alternativeName>
        <fullName evidence="2">30S ribosomal protein S11</fullName>
    </alternativeName>
</protein>
<reference key="1">
    <citation type="journal article" date="2003" name="Nature">
        <title>Genome divergence in two Prochlorococcus ecotypes reflects oceanic niche differentiation.</title>
        <authorList>
            <person name="Rocap G."/>
            <person name="Larimer F.W."/>
            <person name="Lamerdin J.E."/>
            <person name="Malfatti S."/>
            <person name="Chain P."/>
            <person name="Ahlgren N.A."/>
            <person name="Arellano A."/>
            <person name="Coleman M."/>
            <person name="Hauser L."/>
            <person name="Hess W.R."/>
            <person name="Johnson Z.I."/>
            <person name="Land M.L."/>
            <person name="Lindell D."/>
            <person name="Post A.F."/>
            <person name="Regala W."/>
            <person name="Shah M."/>
            <person name="Shaw S.L."/>
            <person name="Steglich C."/>
            <person name="Sullivan M.B."/>
            <person name="Ting C.S."/>
            <person name="Tolonen A."/>
            <person name="Webb E.A."/>
            <person name="Zinser E.R."/>
            <person name="Chisholm S.W."/>
        </authorList>
    </citation>
    <scope>NUCLEOTIDE SEQUENCE [LARGE SCALE GENOMIC DNA]</scope>
    <source>
        <strain>CCMP1986 / NIES-2087 / MED4</strain>
    </source>
</reference>
<evidence type="ECO:0000255" key="1">
    <source>
        <dbReference type="HAMAP-Rule" id="MF_01310"/>
    </source>
</evidence>
<evidence type="ECO:0000305" key="2"/>
<keyword id="KW-0687">Ribonucleoprotein</keyword>
<keyword id="KW-0689">Ribosomal protein</keyword>
<keyword id="KW-0694">RNA-binding</keyword>
<keyword id="KW-0699">rRNA-binding</keyword>